<accession>Q8DYG1</accession>
<reference key="1">
    <citation type="journal article" date="2002" name="Proc. Natl. Acad. Sci. U.S.A.">
        <title>Complete genome sequence and comparative genomic analysis of an emerging human pathogen, serotype V Streptococcus agalactiae.</title>
        <authorList>
            <person name="Tettelin H."/>
            <person name="Masignani V."/>
            <person name="Cieslewicz M.J."/>
            <person name="Eisen J.A."/>
            <person name="Peterson S.N."/>
            <person name="Wessels M.R."/>
            <person name="Paulsen I.T."/>
            <person name="Nelson K.E."/>
            <person name="Margarit I."/>
            <person name="Read T.D."/>
            <person name="Madoff L.C."/>
            <person name="Wolf A.M."/>
            <person name="Beanan M.J."/>
            <person name="Brinkac L.M."/>
            <person name="Daugherty S.C."/>
            <person name="DeBoy R.T."/>
            <person name="Durkin A.S."/>
            <person name="Kolonay J.F."/>
            <person name="Madupu R."/>
            <person name="Lewis M.R."/>
            <person name="Radune D."/>
            <person name="Fedorova N.B."/>
            <person name="Scanlan D."/>
            <person name="Khouri H.M."/>
            <person name="Mulligan S."/>
            <person name="Carty H.A."/>
            <person name="Cline R.T."/>
            <person name="Van Aken S.E."/>
            <person name="Gill J."/>
            <person name="Scarselli M."/>
            <person name="Mora M."/>
            <person name="Iacobini E.T."/>
            <person name="Brettoni C."/>
            <person name="Galli G."/>
            <person name="Mariani M."/>
            <person name="Vegni F."/>
            <person name="Maione D."/>
            <person name="Rinaudo D."/>
            <person name="Rappuoli R."/>
            <person name="Telford J.L."/>
            <person name="Kasper D.L."/>
            <person name="Grandi G."/>
            <person name="Fraser C.M."/>
        </authorList>
    </citation>
    <scope>NUCLEOTIDE SEQUENCE [LARGE SCALE GENOMIC DNA]</scope>
    <source>
        <strain>ATCC BAA-611 / 2603 V/R</strain>
    </source>
</reference>
<proteinExistence type="inferred from homology"/>
<dbReference type="EMBL" id="AE009948">
    <property type="protein sequence ID" value="AAN00387.1"/>
    <property type="molecule type" value="Genomic_DNA"/>
</dbReference>
<dbReference type="RefSeq" id="NP_688514.1">
    <property type="nucleotide sequence ID" value="NC_004116.1"/>
</dbReference>
<dbReference type="RefSeq" id="WP_001085802.1">
    <property type="nucleotide sequence ID" value="NC_004116.1"/>
</dbReference>
<dbReference type="SMR" id="Q8DYG1"/>
<dbReference type="STRING" id="208435.SAG1520"/>
<dbReference type="GeneID" id="66886375"/>
<dbReference type="KEGG" id="sag:SAG1520"/>
<dbReference type="PATRIC" id="fig|208435.3.peg.1529"/>
<dbReference type="HOGENOM" id="CLU_074237_2_1_9"/>
<dbReference type="OrthoDB" id="9802408at2"/>
<dbReference type="Proteomes" id="UP000000821">
    <property type="component" value="Chromosome"/>
</dbReference>
<dbReference type="GO" id="GO:0022625">
    <property type="term" value="C:cytosolic large ribosomal subunit"/>
    <property type="evidence" value="ECO:0007669"/>
    <property type="project" value="TreeGrafter"/>
</dbReference>
<dbReference type="GO" id="GO:0070180">
    <property type="term" value="F:large ribosomal subunit rRNA binding"/>
    <property type="evidence" value="ECO:0007669"/>
    <property type="project" value="UniProtKB-UniRule"/>
</dbReference>
<dbReference type="GO" id="GO:0003735">
    <property type="term" value="F:structural constituent of ribosome"/>
    <property type="evidence" value="ECO:0007669"/>
    <property type="project" value="InterPro"/>
</dbReference>
<dbReference type="GO" id="GO:0006412">
    <property type="term" value="P:translation"/>
    <property type="evidence" value="ECO:0007669"/>
    <property type="project" value="UniProtKB-UniRule"/>
</dbReference>
<dbReference type="CDD" id="cd00349">
    <property type="entry name" value="Ribosomal_L11"/>
    <property type="match status" value="1"/>
</dbReference>
<dbReference type="FunFam" id="1.10.10.250:FF:000001">
    <property type="entry name" value="50S ribosomal protein L11"/>
    <property type="match status" value="1"/>
</dbReference>
<dbReference type="FunFam" id="3.30.1550.10:FF:000001">
    <property type="entry name" value="50S ribosomal protein L11"/>
    <property type="match status" value="1"/>
</dbReference>
<dbReference type="Gene3D" id="1.10.10.250">
    <property type="entry name" value="Ribosomal protein L11, C-terminal domain"/>
    <property type="match status" value="1"/>
</dbReference>
<dbReference type="Gene3D" id="3.30.1550.10">
    <property type="entry name" value="Ribosomal protein L11/L12, N-terminal domain"/>
    <property type="match status" value="1"/>
</dbReference>
<dbReference type="HAMAP" id="MF_00736">
    <property type="entry name" value="Ribosomal_uL11"/>
    <property type="match status" value="1"/>
</dbReference>
<dbReference type="InterPro" id="IPR000911">
    <property type="entry name" value="Ribosomal_uL11"/>
</dbReference>
<dbReference type="InterPro" id="IPR006519">
    <property type="entry name" value="Ribosomal_uL11_bac-typ"/>
</dbReference>
<dbReference type="InterPro" id="IPR020783">
    <property type="entry name" value="Ribosomal_uL11_C"/>
</dbReference>
<dbReference type="InterPro" id="IPR036769">
    <property type="entry name" value="Ribosomal_uL11_C_sf"/>
</dbReference>
<dbReference type="InterPro" id="IPR020785">
    <property type="entry name" value="Ribosomal_uL11_CS"/>
</dbReference>
<dbReference type="InterPro" id="IPR020784">
    <property type="entry name" value="Ribosomal_uL11_N"/>
</dbReference>
<dbReference type="InterPro" id="IPR036796">
    <property type="entry name" value="Ribosomal_uL11_N_sf"/>
</dbReference>
<dbReference type="NCBIfam" id="TIGR01632">
    <property type="entry name" value="L11_bact"/>
    <property type="match status" value="1"/>
</dbReference>
<dbReference type="PANTHER" id="PTHR11661">
    <property type="entry name" value="60S RIBOSOMAL PROTEIN L12"/>
    <property type="match status" value="1"/>
</dbReference>
<dbReference type="PANTHER" id="PTHR11661:SF1">
    <property type="entry name" value="LARGE RIBOSOMAL SUBUNIT PROTEIN UL11M"/>
    <property type="match status" value="1"/>
</dbReference>
<dbReference type="Pfam" id="PF00298">
    <property type="entry name" value="Ribosomal_L11"/>
    <property type="match status" value="1"/>
</dbReference>
<dbReference type="Pfam" id="PF03946">
    <property type="entry name" value="Ribosomal_L11_N"/>
    <property type="match status" value="1"/>
</dbReference>
<dbReference type="SMART" id="SM00649">
    <property type="entry name" value="RL11"/>
    <property type="match status" value="1"/>
</dbReference>
<dbReference type="SUPFAM" id="SSF54747">
    <property type="entry name" value="Ribosomal L11/L12e N-terminal domain"/>
    <property type="match status" value="1"/>
</dbReference>
<dbReference type="SUPFAM" id="SSF46906">
    <property type="entry name" value="Ribosomal protein L11, C-terminal domain"/>
    <property type="match status" value="1"/>
</dbReference>
<dbReference type="PROSITE" id="PS00359">
    <property type="entry name" value="RIBOSOMAL_L11"/>
    <property type="match status" value="1"/>
</dbReference>
<comment type="function">
    <text evidence="1">Forms part of the ribosomal stalk which helps the ribosome interact with GTP-bound translation factors.</text>
</comment>
<comment type="subunit">
    <text evidence="1">Part of the ribosomal stalk of the 50S ribosomal subunit. Interacts with L10 and the large rRNA to form the base of the stalk. L10 forms an elongated spine to which L12 dimers bind in a sequential fashion forming a multimeric L10(L12)X complex.</text>
</comment>
<comment type="PTM">
    <text evidence="1">One or more lysine residues are methylated.</text>
</comment>
<comment type="similarity">
    <text evidence="1">Belongs to the universal ribosomal protein uL11 family.</text>
</comment>
<evidence type="ECO:0000255" key="1">
    <source>
        <dbReference type="HAMAP-Rule" id="MF_00736"/>
    </source>
</evidence>
<evidence type="ECO:0000305" key="2"/>
<organism>
    <name type="scientific">Streptococcus agalactiae serotype V (strain ATCC BAA-611 / 2603 V/R)</name>
    <dbReference type="NCBI Taxonomy" id="208435"/>
    <lineage>
        <taxon>Bacteria</taxon>
        <taxon>Bacillati</taxon>
        <taxon>Bacillota</taxon>
        <taxon>Bacilli</taxon>
        <taxon>Lactobacillales</taxon>
        <taxon>Streptococcaceae</taxon>
        <taxon>Streptococcus</taxon>
    </lineage>
</organism>
<sequence length="141" mass="14886">MAKKVEKLVKLQIPAGKATPAPPVGPALGQAGINIMGFTKEFNARTADQAGMIIPVVISVYEDKSFDFITKTPPAAVLLKKAAGVEKGSGEPNKTKVATITRAQVQEIAETKMPDLNAANLESAMRMIEGTARSMGFTVTD</sequence>
<name>RL11_STRA5</name>
<feature type="chain" id="PRO_0000104373" description="Large ribosomal subunit protein uL11">
    <location>
        <begin position="1"/>
        <end position="141"/>
    </location>
</feature>
<protein>
    <recommendedName>
        <fullName evidence="1">Large ribosomal subunit protein uL11</fullName>
    </recommendedName>
    <alternativeName>
        <fullName evidence="2">50S ribosomal protein L11</fullName>
    </alternativeName>
</protein>
<keyword id="KW-0488">Methylation</keyword>
<keyword id="KW-1185">Reference proteome</keyword>
<keyword id="KW-0687">Ribonucleoprotein</keyword>
<keyword id="KW-0689">Ribosomal protein</keyword>
<keyword id="KW-0694">RNA-binding</keyword>
<keyword id="KW-0699">rRNA-binding</keyword>
<gene>
    <name evidence="1" type="primary">rplK</name>
    <name type="ordered locus">SAG1520</name>
</gene>